<sequence>MADIQTERAYQKQPTIFQNKKRVLLGETGKEKLPRYYKNIGLGFKTPKEAIEGTYIDKKCPFTGNVSIRGRILSGVVTKMKMQRTIVIRRDYLHYIRKYNRFEKRHKNMSVHLSPCFRDVQIGDIVTVGECRPLSKTVRFNVLKVTKAAGTKKQFQKF</sequence>
<name>RS11_RABIT</name>
<accession>G1TRM4</accession>
<organism>
    <name type="scientific">Oryctolagus cuniculus</name>
    <name type="common">Rabbit</name>
    <dbReference type="NCBI Taxonomy" id="9986"/>
    <lineage>
        <taxon>Eukaryota</taxon>
        <taxon>Metazoa</taxon>
        <taxon>Chordata</taxon>
        <taxon>Craniata</taxon>
        <taxon>Vertebrata</taxon>
        <taxon>Euteleostomi</taxon>
        <taxon>Mammalia</taxon>
        <taxon>Eutheria</taxon>
        <taxon>Euarchontoglires</taxon>
        <taxon>Glires</taxon>
        <taxon>Lagomorpha</taxon>
        <taxon>Leporidae</taxon>
        <taxon>Oryctolagus</taxon>
    </lineage>
</organism>
<evidence type="ECO:0000250" key="1">
    <source>
        <dbReference type="UniProtKB" id="P62280"/>
    </source>
</evidence>
<evidence type="ECO:0000250" key="2">
    <source>
        <dbReference type="UniProtKB" id="P62281"/>
    </source>
</evidence>
<evidence type="ECO:0000269" key="3">
    <source>
    </source>
</evidence>
<evidence type="ECO:0000269" key="4">
    <source>
    </source>
</evidence>
<evidence type="ECO:0000269" key="5">
    <source>
    </source>
</evidence>
<evidence type="ECO:0000269" key="6">
    <source>
    </source>
</evidence>
<evidence type="ECO:0000269" key="7">
    <source>
    </source>
</evidence>
<evidence type="ECO:0000269" key="8">
    <source>
    </source>
</evidence>
<evidence type="ECO:0000269" key="9">
    <source>
    </source>
</evidence>
<evidence type="ECO:0000269" key="10">
    <source>
    </source>
</evidence>
<evidence type="ECO:0000269" key="11">
    <source>
    </source>
</evidence>
<evidence type="ECO:0000269" key="12">
    <source>
    </source>
</evidence>
<evidence type="ECO:0000269" key="13">
    <source>
    </source>
</evidence>
<evidence type="ECO:0000269" key="14">
    <source>
    </source>
</evidence>
<evidence type="ECO:0000269" key="15">
    <source>
    </source>
</evidence>
<evidence type="ECO:0000269" key="16">
    <source>
    </source>
</evidence>
<evidence type="ECO:0000269" key="17">
    <source>
    </source>
</evidence>
<evidence type="ECO:0000269" key="18">
    <source>
    </source>
</evidence>
<evidence type="ECO:0000269" key="19">
    <source>
    </source>
</evidence>
<evidence type="ECO:0000305" key="20"/>
<evidence type="ECO:0007744" key="21">
    <source>
        <dbReference type="PDB" id="3JAG"/>
    </source>
</evidence>
<evidence type="ECO:0007744" key="22">
    <source>
        <dbReference type="PDB" id="3JAH"/>
    </source>
</evidence>
<evidence type="ECO:0007744" key="23">
    <source>
        <dbReference type="PDB" id="4D5L"/>
    </source>
</evidence>
<evidence type="ECO:0007744" key="24">
    <source>
        <dbReference type="PDB" id="4D61"/>
    </source>
</evidence>
<evidence type="ECO:0007744" key="25">
    <source>
        <dbReference type="PDB" id="4KZX"/>
    </source>
</evidence>
<evidence type="ECO:0007744" key="26">
    <source>
        <dbReference type="PDB" id="4KZY"/>
    </source>
</evidence>
<evidence type="ECO:0007744" key="27">
    <source>
        <dbReference type="PDB" id="5LZS"/>
    </source>
</evidence>
<evidence type="ECO:0007744" key="28">
    <source>
        <dbReference type="PDB" id="5LZT"/>
    </source>
</evidence>
<evidence type="ECO:0007744" key="29">
    <source>
        <dbReference type="PDB" id="6D90"/>
    </source>
</evidence>
<evidence type="ECO:0007744" key="30">
    <source>
        <dbReference type="PDB" id="6D9J"/>
    </source>
</evidence>
<evidence type="ECO:0007744" key="31">
    <source>
        <dbReference type="PDB" id="6GZ3"/>
    </source>
</evidence>
<evidence type="ECO:0007744" key="32">
    <source>
        <dbReference type="PDB" id="6HCM"/>
    </source>
</evidence>
<evidence type="ECO:0007744" key="33">
    <source>
        <dbReference type="PDB" id="6MTB"/>
    </source>
</evidence>
<evidence type="ECO:0007744" key="34">
    <source>
        <dbReference type="PDB" id="6MTC"/>
    </source>
</evidence>
<evidence type="ECO:0007744" key="35">
    <source>
        <dbReference type="PDB" id="6P4G"/>
    </source>
</evidence>
<evidence type="ECO:0007744" key="36">
    <source>
        <dbReference type="PDB" id="6P4H"/>
    </source>
</evidence>
<evidence type="ECO:0007744" key="37">
    <source>
        <dbReference type="PDB" id="6R5Q"/>
    </source>
</evidence>
<evidence type="ECO:0007744" key="38">
    <source>
        <dbReference type="PDB" id="6R6G"/>
    </source>
</evidence>
<evidence type="ECO:0007744" key="39">
    <source>
        <dbReference type="PDB" id="6SGC"/>
    </source>
</evidence>
<evidence type="ECO:0007744" key="40">
    <source>
        <dbReference type="PDB" id="6W2S"/>
    </source>
</evidence>
<evidence type="ECO:0007744" key="41">
    <source>
        <dbReference type="PDB" id="6W2T"/>
    </source>
</evidence>
<evidence type="ECO:0007744" key="42">
    <source>
        <dbReference type="PDB" id="6ZVK"/>
    </source>
</evidence>
<evidence type="ECO:0007744" key="43">
    <source>
        <dbReference type="PDB" id="7A01"/>
    </source>
</evidence>
<evidence type="ECO:0007744" key="44">
    <source>
        <dbReference type="PDB" id="7OYD"/>
    </source>
</evidence>
<evidence type="ECO:0007744" key="45">
    <source>
        <dbReference type="PDB" id="7SYI"/>
    </source>
</evidence>
<evidence type="ECO:0007744" key="46">
    <source>
        <dbReference type="PDB" id="7SYJ"/>
    </source>
</evidence>
<evidence type="ECO:0007744" key="47">
    <source>
        <dbReference type="PDB" id="7UCJ"/>
    </source>
</evidence>
<evidence type="ECO:0007744" key="48">
    <source>
        <dbReference type="PDB" id="7UCK"/>
    </source>
</evidence>
<evidence type="ECO:0007744" key="49">
    <source>
        <dbReference type="PDB" id="7ZJW"/>
    </source>
</evidence>
<evidence type="ECO:0007744" key="50">
    <source>
        <dbReference type="PDB" id="7ZJX"/>
    </source>
</evidence>
<evidence type="ECO:0007829" key="51">
    <source>
        <dbReference type="PDB" id="6P4G"/>
    </source>
</evidence>
<evidence type="ECO:0007829" key="52">
    <source>
        <dbReference type="PDB" id="6YAL"/>
    </source>
</evidence>
<evidence type="ECO:0007829" key="53">
    <source>
        <dbReference type="PDB" id="6YAN"/>
    </source>
</evidence>
<evidence type="ECO:0007829" key="54">
    <source>
        <dbReference type="PDB" id="7JQB"/>
    </source>
</evidence>
<evidence type="ECO:0007829" key="55">
    <source>
        <dbReference type="PDB" id="8P03"/>
    </source>
</evidence>
<keyword id="KW-0002">3D-structure</keyword>
<keyword id="KW-0007">Acetylation</keyword>
<keyword id="KW-0164">Citrullination</keyword>
<keyword id="KW-0963">Cytoplasm</keyword>
<keyword id="KW-0449">Lipoprotein</keyword>
<keyword id="KW-0488">Methylation</keyword>
<keyword id="KW-0539">Nucleus</keyword>
<keyword id="KW-0564">Palmitate</keyword>
<keyword id="KW-0597">Phosphoprotein</keyword>
<keyword id="KW-1185">Reference proteome</keyword>
<keyword id="KW-0687">Ribonucleoprotein</keyword>
<keyword id="KW-0689">Ribosomal protein</keyword>
<keyword id="KW-0694">RNA-binding</keyword>
<keyword id="KW-0699">rRNA-binding</keyword>
<feature type="initiator methionine" description="Removed" evidence="1">
    <location>
        <position position="1"/>
    </location>
</feature>
<feature type="chain" id="PRO_0000460062" description="Small ribosomal subunit protein uS17">
    <location>
        <begin position="2"/>
        <end position="158"/>
    </location>
</feature>
<feature type="modified residue" description="N-acetylalanine" evidence="1">
    <location>
        <position position="2"/>
    </location>
</feature>
<feature type="modified residue" description="Citrulline" evidence="2">
    <location>
        <position position="22"/>
    </location>
</feature>
<feature type="modified residue" description="N6-acetyllysine" evidence="1">
    <location>
        <position position="38"/>
    </location>
</feature>
<feature type="modified residue" description="N6-acetyllysine" evidence="1">
    <location>
        <position position="45"/>
    </location>
</feature>
<feature type="modified residue" description="N6-acetyllysine" evidence="2">
    <location>
        <position position="58"/>
    </location>
</feature>
<feature type="modified residue" description="Phosphoserine" evidence="1">
    <location>
        <position position="67"/>
    </location>
</feature>
<feature type="modified residue" description="Omega-N-methylarginine" evidence="2">
    <location>
        <position position="69"/>
    </location>
</feature>
<feature type="modified residue" description="Phosphoserine" evidence="1">
    <location>
        <position position="110"/>
    </location>
</feature>
<feature type="lipid moiety-binding region" description="S-palmitoyl cysteine" evidence="1">
    <location>
        <position position="60"/>
    </location>
</feature>
<feature type="strand" evidence="54">
    <location>
        <begin position="7"/>
        <end position="9"/>
    </location>
</feature>
<feature type="strand" evidence="51">
    <location>
        <begin position="14"/>
        <end position="16"/>
    </location>
</feature>
<feature type="strand" evidence="54">
    <location>
        <begin position="25"/>
        <end position="28"/>
    </location>
</feature>
<feature type="strand" evidence="53">
    <location>
        <begin position="30"/>
        <end position="32"/>
    </location>
</feature>
<feature type="helix" evidence="54">
    <location>
        <begin position="48"/>
        <end position="51"/>
    </location>
</feature>
<feature type="strand" evidence="52">
    <location>
        <begin position="58"/>
        <end position="60"/>
    </location>
</feature>
<feature type="turn" evidence="54">
    <location>
        <begin position="61"/>
        <end position="63"/>
    </location>
</feature>
<feature type="strand" evidence="54">
    <location>
        <begin position="72"/>
        <end position="82"/>
    </location>
</feature>
<feature type="strand" evidence="54">
    <location>
        <begin position="85"/>
        <end position="95"/>
    </location>
</feature>
<feature type="strand" evidence="54">
    <location>
        <begin position="97"/>
        <end position="100"/>
    </location>
</feature>
<feature type="strand" evidence="54">
    <location>
        <begin position="102"/>
        <end position="112"/>
    </location>
</feature>
<feature type="strand" evidence="54">
    <location>
        <begin position="125"/>
        <end position="130"/>
    </location>
</feature>
<feature type="strand" evidence="54">
    <location>
        <begin position="135"/>
        <end position="137"/>
    </location>
</feature>
<feature type="strand" evidence="54">
    <location>
        <begin position="140"/>
        <end position="145"/>
    </location>
</feature>
<feature type="strand" evidence="52">
    <location>
        <begin position="149"/>
        <end position="151"/>
    </location>
</feature>
<feature type="strand" evidence="55">
    <location>
        <begin position="153"/>
        <end position="155"/>
    </location>
</feature>
<dbReference type="EMBL" id="AAGW02006416">
    <property type="status" value="NOT_ANNOTATED_CDS"/>
    <property type="molecule type" value="Genomic_DNA"/>
</dbReference>
<dbReference type="RefSeq" id="XP_002709911.1">
    <property type="nucleotide sequence ID" value="XM_002709865.2"/>
</dbReference>
<dbReference type="RefSeq" id="XP_002709974.1">
    <property type="nucleotide sequence ID" value="XM_002709928.3"/>
</dbReference>
<dbReference type="RefSeq" id="XP_051696663.1">
    <property type="nucleotide sequence ID" value="XM_051840703.2"/>
</dbReference>
<dbReference type="PDB" id="3JAG">
    <property type="method" value="EM"/>
    <property type="resolution" value="3.65 A"/>
    <property type="chains" value="LL=2-153"/>
</dbReference>
<dbReference type="PDB" id="3JAH">
    <property type="method" value="EM"/>
    <property type="resolution" value="3.45 A"/>
    <property type="chains" value="LL=2-153"/>
</dbReference>
<dbReference type="PDB" id="3JAI">
    <property type="method" value="EM"/>
    <property type="resolution" value="3.65 A"/>
    <property type="chains" value="LL=2-153"/>
</dbReference>
<dbReference type="PDB" id="4D5L">
    <property type="method" value="EM"/>
    <property type="resolution" value="9.00 A"/>
    <property type="chains" value="L=1-158"/>
</dbReference>
<dbReference type="PDB" id="4D61">
    <property type="method" value="EM"/>
    <property type="resolution" value="9.00 A"/>
    <property type="chains" value="L=1-158"/>
</dbReference>
<dbReference type="PDB" id="4KZX">
    <property type="method" value="X-ray"/>
    <property type="resolution" value="7.81 A"/>
    <property type="chains" value="L=1-158"/>
</dbReference>
<dbReference type="PDB" id="4KZY">
    <property type="method" value="X-ray"/>
    <property type="resolution" value="7.01 A"/>
    <property type="chains" value="L=1-158"/>
</dbReference>
<dbReference type="PDB" id="4KZZ">
    <property type="method" value="X-ray"/>
    <property type="resolution" value="7.03 A"/>
    <property type="chains" value="L=1-158"/>
</dbReference>
<dbReference type="PDB" id="5K0Y">
    <property type="method" value="EM"/>
    <property type="resolution" value="5.80 A"/>
    <property type="chains" value="G=1-158"/>
</dbReference>
<dbReference type="PDB" id="5LZS">
    <property type="method" value="EM"/>
    <property type="resolution" value="3.31 A"/>
    <property type="chains" value="LL=1-158"/>
</dbReference>
<dbReference type="PDB" id="5LZT">
    <property type="method" value="EM"/>
    <property type="resolution" value="3.65 A"/>
    <property type="chains" value="LL=1-158"/>
</dbReference>
<dbReference type="PDB" id="5LZU">
    <property type="method" value="EM"/>
    <property type="resolution" value="3.75 A"/>
    <property type="chains" value="LL=1-158"/>
</dbReference>
<dbReference type="PDB" id="5LZV">
    <property type="method" value="EM"/>
    <property type="resolution" value="3.35 A"/>
    <property type="chains" value="LL=1-158"/>
</dbReference>
<dbReference type="PDB" id="5LZW">
    <property type="method" value="EM"/>
    <property type="resolution" value="3.53 A"/>
    <property type="chains" value="LL=1-158"/>
</dbReference>
<dbReference type="PDB" id="5LZX">
    <property type="method" value="EM"/>
    <property type="resolution" value="3.67 A"/>
    <property type="chains" value="LL=1-158"/>
</dbReference>
<dbReference type="PDB" id="5LZY">
    <property type="method" value="EM"/>
    <property type="resolution" value="3.99 A"/>
    <property type="chains" value="LL=1-158"/>
</dbReference>
<dbReference type="PDB" id="5LZZ">
    <property type="method" value="EM"/>
    <property type="resolution" value="3.47 A"/>
    <property type="chains" value="LL=1-158"/>
</dbReference>
<dbReference type="PDB" id="6D90">
    <property type="method" value="EM"/>
    <property type="resolution" value="3.20 A"/>
    <property type="chains" value="MM=1-158"/>
</dbReference>
<dbReference type="PDB" id="6D9J">
    <property type="method" value="EM"/>
    <property type="resolution" value="3.20 A"/>
    <property type="chains" value="MM=1-158"/>
</dbReference>
<dbReference type="PDB" id="6GZ3">
    <property type="method" value="EM"/>
    <property type="resolution" value="3.60 A"/>
    <property type="chains" value="BL=6-158"/>
</dbReference>
<dbReference type="PDB" id="6HCF">
    <property type="method" value="EM"/>
    <property type="resolution" value="3.90 A"/>
    <property type="chains" value="M1=1-158"/>
</dbReference>
<dbReference type="PDB" id="6HCJ">
    <property type="method" value="EM"/>
    <property type="resolution" value="3.80 A"/>
    <property type="chains" value="M2=1-158"/>
</dbReference>
<dbReference type="PDB" id="6HCM">
    <property type="method" value="EM"/>
    <property type="resolution" value="6.80 A"/>
    <property type="chains" value="M1=1-158"/>
</dbReference>
<dbReference type="PDB" id="6HCQ">
    <property type="method" value="EM"/>
    <property type="resolution" value="6.50 A"/>
    <property type="chains" value="M2=1-158"/>
</dbReference>
<dbReference type="PDB" id="6MTB">
    <property type="method" value="EM"/>
    <property type="resolution" value="3.60 A"/>
    <property type="chains" value="LL=1-158"/>
</dbReference>
<dbReference type="PDB" id="6MTC">
    <property type="method" value="EM"/>
    <property type="resolution" value="3.40 A"/>
    <property type="chains" value="LL=1-158"/>
</dbReference>
<dbReference type="PDB" id="6MTD">
    <property type="method" value="EM"/>
    <property type="resolution" value="3.30 A"/>
    <property type="chains" value="LL=1-158"/>
</dbReference>
<dbReference type="PDB" id="6MTE">
    <property type="method" value="EM"/>
    <property type="resolution" value="3.40 A"/>
    <property type="chains" value="LL=1-158"/>
</dbReference>
<dbReference type="PDB" id="6P4G">
    <property type="method" value="EM"/>
    <property type="resolution" value="3.10 A"/>
    <property type="chains" value="M=1-158"/>
</dbReference>
<dbReference type="PDB" id="6P4H">
    <property type="method" value="EM"/>
    <property type="resolution" value="3.20 A"/>
    <property type="chains" value="M=1-158"/>
</dbReference>
<dbReference type="PDB" id="6P5I">
    <property type="method" value="EM"/>
    <property type="resolution" value="3.10 A"/>
    <property type="chains" value="M=1-158"/>
</dbReference>
<dbReference type="PDB" id="6P5J">
    <property type="method" value="EM"/>
    <property type="resolution" value="3.10 A"/>
    <property type="chains" value="M=1-158"/>
</dbReference>
<dbReference type="PDB" id="6P5K">
    <property type="method" value="EM"/>
    <property type="resolution" value="3.10 A"/>
    <property type="chains" value="M=1-158"/>
</dbReference>
<dbReference type="PDB" id="6P5N">
    <property type="method" value="EM"/>
    <property type="resolution" value="3.20 A"/>
    <property type="chains" value="M=1-158"/>
</dbReference>
<dbReference type="PDB" id="6R5Q">
    <property type="method" value="EM"/>
    <property type="resolution" value="3.00 A"/>
    <property type="chains" value="EE=3-153"/>
</dbReference>
<dbReference type="PDB" id="6R6G">
    <property type="method" value="EM"/>
    <property type="resolution" value="3.70 A"/>
    <property type="chains" value="EE=3-153"/>
</dbReference>
<dbReference type="PDB" id="6R6P">
    <property type="method" value="EM"/>
    <property type="resolution" value="3.10 A"/>
    <property type="chains" value="EE=3-153"/>
</dbReference>
<dbReference type="PDB" id="6R7Q">
    <property type="method" value="EM"/>
    <property type="resolution" value="3.90 A"/>
    <property type="chains" value="EE=3-153"/>
</dbReference>
<dbReference type="PDB" id="6SGC">
    <property type="method" value="EM"/>
    <property type="resolution" value="2.80 A"/>
    <property type="chains" value="M1=1-158"/>
</dbReference>
<dbReference type="PDB" id="6W2S">
    <property type="method" value="EM"/>
    <property type="resolution" value="3.00 A"/>
    <property type="chains" value="M=1-158"/>
</dbReference>
<dbReference type="PDB" id="6W2T">
    <property type="method" value="EM"/>
    <property type="resolution" value="3.36 A"/>
    <property type="chains" value="M=1-158"/>
</dbReference>
<dbReference type="PDB" id="6YAL">
    <property type="method" value="EM"/>
    <property type="resolution" value="3.00 A"/>
    <property type="chains" value="N=1-158"/>
</dbReference>
<dbReference type="PDB" id="6YAM">
    <property type="method" value="EM"/>
    <property type="resolution" value="3.60 A"/>
    <property type="chains" value="N=1-158"/>
</dbReference>
<dbReference type="PDB" id="6YAN">
    <property type="method" value="EM"/>
    <property type="resolution" value="3.48 A"/>
    <property type="chains" value="N=1-158"/>
</dbReference>
<dbReference type="PDB" id="6ZVK">
    <property type="method" value="EM"/>
    <property type="resolution" value="3.49 A"/>
    <property type="chains" value="G3=2-154"/>
</dbReference>
<dbReference type="PDB" id="7A01">
    <property type="method" value="EM"/>
    <property type="resolution" value="3.60 A"/>
    <property type="chains" value="G3=2-154"/>
</dbReference>
<dbReference type="PDB" id="7JQB">
    <property type="method" value="EM"/>
    <property type="resolution" value="2.70 A"/>
    <property type="chains" value="O=1-158"/>
</dbReference>
<dbReference type="PDB" id="7JQC">
    <property type="method" value="EM"/>
    <property type="resolution" value="3.30 A"/>
    <property type="chains" value="O=1-158"/>
</dbReference>
<dbReference type="PDB" id="7MDZ">
    <property type="method" value="EM"/>
    <property type="resolution" value="3.20 A"/>
    <property type="chains" value="LL=1-158"/>
</dbReference>
<dbReference type="PDB" id="7NWG">
    <property type="method" value="EM"/>
    <property type="resolution" value="3.80 A"/>
    <property type="chains" value="M2=1-158"/>
</dbReference>
<dbReference type="PDB" id="7NWI">
    <property type="method" value="EM"/>
    <property type="resolution" value="3.13 A"/>
    <property type="chains" value="LL=1-158"/>
</dbReference>
<dbReference type="PDB" id="7O7Y">
    <property type="method" value="EM"/>
    <property type="resolution" value="2.20 A"/>
    <property type="chains" value="Ak=1-158"/>
</dbReference>
<dbReference type="PDB" id="7O7Z">
    <property type="method" value="EM"/>
    <property type="resolution" value="2.40 A"/>
    <property type="chains" value="Ak=1-158"/>
</dbReference>
<dbReference type="PDB" id="7O80">
    <property type="method" value="EM"/>
    <property type="resolution" value="2.90 A"/>
    <property type="chains" value="Ak=1-158"/>
</dbReference>
<dbReference type="PDB" id="7O81">
    <property type="method" value="EM"/>
    <property type="resolution" value="3.10 A"/>
    <property type="chains" value="Ak=1-158"/>
</dbReference>
<dbReference type="PDB" id="7OYD">
    <property type="method" value="EM"/>
    <property type="resolution" value="2.30 A"/>
    <property type="chains" value="LL=1-158"/>
</dbReference>
<dbReference type="PDB" id="7SYG">
    <property type="method" value="EM"/>
    <property type="resolution" value="4.30 A"/>
    <property type="chains" value="M=1-158"/>
</dbReference>
<dbReference type="PDB" id="7SYH">
    <property type="method" value="EM"/>
    <property type="resolution" value="4.60 A"/>
    <property type="chains" value="M=1-158"/>
</dbReference>
<dbReference type="PDB" id="7SYI">
    <property type="method" value="EM"/>
    <property type="resolution" value="4.50 A"/>
    <property type="chains" value="M=1-158"/>
</dbReference>
<dbReference type="PDB" id="7SYJ">
    <property type="method" value="EM"/>
    <property type="resolution" value="4.80 A"/>
    <property type="chains" value="M=1-158"/>
</dbReference>
<dbReference type="PDB" id="7SYK">
    <property type="method" value="EM"/>
    <property type="resolution" value="4.20 A"/>
    <property type="chains" value="M=1-158"/>
</dbReference>
<dbReference type="PDB" id="7SYL">
    <property type="method" value="EM"/>
    <property type="resolution" value="4.50 A"/>
    <property type="chains" value="M=1-158"/>
</dbReference>
<dbReference type="PDB" id="7SYM">
    <property type="method" value="EM"/>
    <property type="resolution" value="4.80 A"/>
    <property type="chains" value="M=1-158"/>
</dbReference>
<dbReference type="PDB" id="7SYN">
    <property type="method" value="EM"/>
    <property type="resolution" value="4.00 A"/>
    <property type="chains" value="M=1-158"/>
</dbReference>
<dbReference type="PDB" id="7SYO">
    <property type="method" value="EM"/>
    <property type="resolution" value="4.60 A"/>
    <property type="chains" value="M=1-158"/>
</dbReference>
<dbReference type="PDB" id="7SYP">
    <property type="method" value="EM"/>
    <property type="resolution" value="4.00 A"/>
    <property type="chains" value="M=1-158"/>
</dbReference>
<dbReference type="PDB" id="7SYQ">
    <property type="method" value="EM"/>
    <property type="resolution" value="3.80 A"/>
    <property type="chains" value="M=1-158"/>
</dbReference>
<dbReference type="PDB" id="7SYR">
    <property type="method" value="EM"/>
    <property type="resolution" value="3.60 A"/>
    <property type="chains" value="M=1-158"/>
</dbReference>
<dbReference type="PDB" id="7SYS">
    <property type="method" value="EM"/>
    <property type="resolution" value="3.50 A"/>
    <property type="chains" value="M=1-158"/>
</dbReference>
<dbReference type="PDB" id="7SYT">
    <property type="method" value="EM"/>
    <property type="resolution" value="4.40 A"/>
    <property type="chains" value="M=1-158"/>
</dbReference>
<dbReference type="PDB" id="7SYU">
    <property type="method" value="EM"/>
    <property type="resolution" value="4.60 A"/>
    <property type="chains" value="M=1-158"/>
</dbReference>
<dbReference type="PDB" id="7SYV">
    <property type="method" value="EM"/>
    <property type="resolution" value="3.90 A"/>
    <property type="chains" value="M=1-158"/>
</dbReference>
<dbReference type="PDB" id="7SYW">
    <property type="method" value="EM"/>
    <property type="resolution" value="3.70 A"/>
    <property type="chains" value="M=1-158"/>
</dbReference>
<dbReference type="PDB" id="7SYX">
    <property type="method" value="EM"/>
    <property type="resolution" value="3.70 A"/>
    <property type="chains" value="M=1-158"/>
</dbReference>
<dbReference type="PDB" id="7TOQ">
    <property type="method" value="EM"/>
    <property type="resolution" value="3.10 A"/>
    <property type="chains" value="AS11=3-153"/>
</dbReference>
<dbReference type="PDB" id="7TOR">
    <property type="method" value="EM"/>
    <property type="resolution" value="2.90 A"/>
    <property type="chains" value="AS11=3-153"/>
</dbReference>
<dbReference type="PDB" id="7UCJ">
    <property type="method" value="EM"/>
    <property type="resolution" value="3.10 A"/>
    <property type="chains" value="LL=3-153"/>
</dbReference>
<dbReference type="PDB" id="7UCK">
    <property type="method" value="EM"/>
    <property type="resolution" value="2.80 A"/>
    <property type="chains" value="LL=3-153"/>
</dbReference>
<dbReference type="PDB" id="7ZJW">
    <property type="method" value="EM"/>
    <property type="resolution" value="2.80 A"/>
    <property type="chains" value="SW=1-158"/>
</dbReference>
<dbReference type="PDB" id="7ZJX">
    <property type="method" value="EM"/>
    <property type="resolution" value="3.10 A"/>
    <property type="chains" value="SW=1-158"/>
</dbReference>
<dbReference type="PDB" id="8BHF">
    <property type="method" value="EM"/>
    <property type="resolution" value="3.10 A"/>
    <property type="chains" value="M3=3-153"/>
</dbReference>
<dbReference type="PDB" id="8BTK">
    <property type="method" value="EM"/>
    <property type="resolution" value="3.50 A"/>
    <property type="chains" value="Ak=1-158"/>
</dbReference>
<dbReference type="PDB" id="8P03">
    <property type="method" value="EM"/>
    <property type="resolution" value="3.04 A"/>
    <property type="chains" value="N=1-158"/>
</dbReference>
<dbReference type="PDB" id="8P09">
    <property type="method" value="EM"/>
    <property type="resolution" value="3.30 A"/>
    <property type="chains" value="N=1-158"/>
</dbReference>
<dbReference type="PDB" id="8P2K">
    <property type="method" value="EM"/>
    <property type="resolution" value="2.90 A"/>
    <property type="chains" value="Ak=1-158"/>
</dbReference>
<dbReference type="PDB" id="8SCB">
    <property type="method" value="EM"/>
    <property type="resolution" value="2.50 A"/>
    <property type="chains" value="LL=1-158"/>
</dbReference>
<dbReference type="PDB" id="8VFT">
    <property type="method" value="EM"/>
    <property type="resolution" value="3.30 A"/>
    <property type="chains" value="LL=1-158"/>
</dbReference>
<dbReference type="PDB" id="9BDL">
    <property type="method" value="EM"/>
    <property type="resolution" value="2.80 A"/>
    <property type="chains" value="AS11=3-153"/>
</dbReference>
<dbReference type="PDB" id="9BDN">
    <property type="method" value="EM"/>
    <property type="resolution" value="3.10 A"/>
    <property type="chains" value="AS11=3-153"/>
</dbReference>
<dbReference type="PDB" id="9BDP">
    <property type="method" value="EM"/>
    <property type="resolution" value="3.70 A"/>
    <property type="chains" value="AS11=3-153"/>
</dbReference>
<dbReference type="PDB" id="9C8K">
    <property type="method" value="EM"/>
    <property type="resolution" value="3.10 A"/>
    <property type="chains" value="L=1-158"/>
</dbReference>
<dbReference type="PDB" id="9F1B">
    <property type="method" value="EM"/>
    <property type="resolution" value="3.01 A"/>
    <property type="chains" value="Ak=1-158"/>
</dbReference>
<dbReference type="PDB" id="9F1C">
    <property type="method" value="EM"/>
    <property type="resolution" value="3.78 A"/>
    <property type="chains" value="Ak=1-158"/>
</dbReference>
<dbReference type="PDB" id="9F1D">
    <property type="method" value="EM"/>
    <property type="resolution" value="3.26 A"/>
    <property type="chains" value="Ak=1-158"/>
</dbReference>
<dbReference type="PDBsum" id="3JAG"/>
<dbReference type="PDBsum" id="3JAH"/>
<dbReference type="PDBsum" id="3JAI"/>
<dbReference type="PDBsum" id="4D5L"/>
<dbReference type="PDBsum" id="4D61"/>
<dbReference type="PDBsum" id="4KZX"/>
<dbReference type="PDBsum" id="4KZY"/>
<dbReference type="PDBsum" id="4KZZ"/>
<dbReference type="PDBsum" id="5K0Y"/>
<dbReference type="PDBsum" id="5LZS"/>
<dbReference type="PDBsum" id="5LZT"/>
<dbReference type="PDBsum" id="5LZU"/>
<dbReference type="PDBsum" id="5LZV"/>
<dbReference type="PDBsum" id="5LZW"/>
<dbReference type="PDBsum" id="5LZX"/>
<dbReference type="PDBsum" id="5LZY"/>
<dbReference type="PDBsum" id="5LZZ"/>
<dbReference type="PDBsum" id="6D90"/>
<dbReference type="PDBsum" id="6D9J"/>
<dbReference type="PDBsum" id="6GZ3"/>
<dbReference type="PDBsum" id="6HCF"/>
<dbReference type="PDBsum" id="6HCJ"/>
<dbReference type="PDBsum" id="6HCM"/>
<dbReference type="PDBsum" id="6HCQ"/>
<dbReference type="PDBsum" id="6MTB"/>
<dbReference type="PDBsum" id="6MTC"/>
<dbReference type="PDBsum" id="6MTD"/>
<dbReference type="PDBsum" id="6MTE"/>
<dbReference type="PDBsum" id="6P4G"/>
<dbReference type="PDBsum" id="6P4H"/>
<dbReference type="PDBsum" id="6P5I"/>
<dbReference type="PDBsum" id="6P5J"/>
<dbReference type="PDBsum" id="6P5K"/>
<dbReference type="PDBsum" id="6P5N"/>
<dbReference type="PDBsum" id="6R5Q"/>
<dbReference type="PDBsum" id="6R6G"/>
<dbReference type="PDBsum" id="6R6P"/>
<dbReference type="PDBsum" id="6R7Q"/>
<dbReference type="PDBsum" id="6SGC"/>
<dbReference type="PDBsum" id="6W2S"/>
<dbReference type="PDBsum" id="6W2T"/>
<dbReference type="PDBsum" id="6YAL"/>
<dbReference type="PDBsum" id="6YAM"/>
<dbReference type="PDBsum" id="6YAN"/>
<dbReference type="PDBsum" id="6ZVK"/>
<dbReference type="PDBsum" id="7A01"/>
<dbReference type="PDBsum" id="7JQB"/>
<dbReference type="PDBsum" id="7JQC"/>
<dbReference type="PDBsum" id="7MDZ"/>
<dbReference type="PDBsum" id="7NWG"/>
<dbReference type="PDBsum" id="7NWI"/>
<dbReference type="PDBsum" id="7O7Y"/>
<dbReference type="PDBsum" id="7O7Z"/>
<dbReference type="PDBsum" id="7O80"/>
<dbReference type="PDBsum" id="7O81"/>
<dbReference type="PDBsum" id="7OYD"/>
<dbReference type="PDBsum" id="7SYG"/>
<dbReference type="PDBsum" id="7SYH"/>
<dbReference type="PDBsum" id="7SYI"/>
<dbReference type="PDBsum" id="7SYJ"/>
<dbReference type="PDBsum" id="7SYK"/>
<dbReference type="PDBsum" id="7SYL"/>
<dbReference type="PDBsum" id="7SYM"/>
<dbReference type="PDBsum" id="7SYN"/>
<dbReference type="PDBsum" id="7SYO"/>
<dbReference type="PDBsum" id="7SYP"/>
<dbReference type="PDBsum" id="7SYQ"/>
<dbReference type="PDBsum" id="7SYR"/>
<dbReference type="PDBsum" id="7SYS"/>
<dbReference type="PDBsum" id="7SYT"/>
<dbReference type="PDBsum" id="7SYU"/>
<dbReference type="PDBsum" id="7SYV"/>
<dbReference type="PDBsum" id="7SYW"/>
<dbReference type="PDBsum" id="7SYX"/>
<dbReference type="PDBsum" id="7TOQ"/>
<dbReference type="PDBsum" id="7TOR"/>
<dbReference type="PDBsum" id="7UCJ"/>
<dbReference type="PDBsum" id="7UCK"/>
<dbReference type="PDBsum" id="7ZJW"/>
<dbReference type="PDBsum" id="7ZJX"/>
<dbReference type="PDBsum" id="8BHF"/>
<dbReference type="PDBsum" id="8BTK"/>
<dbReference type="PDBsum" id="8P03"/>
<dbReference type="PDBsum" id="8P09"/>
<dbReference type="PDBsum" id="8P2K"/>
<dbReference type="PDBsum" id="8SCB"/>
<dbReference type="PDBsum" id="8VFT"/>
<dbReference type="PDBsum" id="9BDL"/>
<dbReference type="PDBsum" id="9BDN"/>
<dbReference type="PDBsum" id="9BDP"/>
<dbReference type="PDBsum" id="9C8K"/>
<dbReference type="PDBsum" id="9F1B"/>
<dbReference type="PDBsum" id="9F1C"/>
<dbReference type="PDBsum" id="9F1D"/>
<dbReference type="EMDB" id="EMD-0098"/>
<dbReference type="EMDB" id="EMD-0099"/>
<dbReference type="EMDB" id="EMD-0100"/>
<dbReference type="EMDB" id="EMD-0192"/>
<dbReference type="EMDB" id="EMD-0194"/>
<dbReference type="EMDB" id="EMD-0195"/>
<dbReference type="EMDB" id="EMD-0197"/>
<dbReference type="EMDB" id="EMD-10181"/>
<dbReference type="EMDB" id="EMD-10760"/>
<dbReference type="EMDB" id="EMD-10761"/>
<dbReference type="EMDB" id="EMD-10762"/>
<dbReference type="EMDB" id="EMD-11459"/>
<dbReference type="EMDB" id="EMD-11590"/>
<dbReference type="EMDB" id="EMD-12631"/>
<dbReference type="EMDB" id="EMD-12633"/>
<dbReference type="EMDB" id="EMD-12756"/>
<dbReference type="EMDB" id="EMD-12757"/>
<dbReference type="EMDB" id="EMD-12758"/>
<dbReference type="EMDB" id="EMD-12759"/>
<dbReference type="EMDB" id="EMD-13114"/>
<dbReference type="EMDB" id="EMD-14751"/>
<dbReference type="EMDB" id="EMD-14752"/>
<dbReference type="EMDB" id="EMD-16052"/>
<dbReference type="EMDB" id="EMD-16232"/>
<dbReference type="EMDB" id="EMD-17329"/>
<dbReference type="EMDB" id="EMD-17330"/>
<dbReference type="EMDB" id="EMD-17367"/>
<dbReference type="EMDB" id="EMD-20248"/>
<dbReference type="EMDB" id="EMD-20249"/>
<dbReference type="EMDB" id="EMD-20255"/>
<dbReference type="EMDB" id="EMD-20256"/>
<dbReference type="EMDB" id="EMD-20257"/>
<dbReference type="EMDB" id="EMD-20258"/>
<dbReference type="EMDB" id="EMD-21529"/>
<dbReference type="EMDB" id="EMD-21530"/>
<dbReference type="EMDB" id="EMD-22432"/>
<dbReference type="EMDB" id="EMD-22433"/>
<dbReference type="EMDB" id="EMD-23785"/>
<dbReference type="EMDB" id="EMD-25527"/>
<dbReference type="EMDB" id="EMD-25528"/>
<dbReference type="EMDB" id="EMD-25529"/>
<dbReference type="EMDB" id="EMD-25530"/>
<dbReference type="EMDB" id="EMD-25531"/>
<dbReference type="EMDB" id="EMD-25532"/>
<dbReference type="EMDB" id="EMD-25533"/>
<dbReference type="EMDB" id="EMD-25534"/>
<dbReference type="EMDB" id="EMD-25535"/>
<dbReference type="EMDB" id="EMD-25536"/>
<dbReference type="EMDB" id="EMD-25537"/>
<dbReference type="EMDB" id="EMD-25538"/>
<dbReference type="EMDB" id="EMD-25539"/>
<dbReference type="EMDB" id="EMD-25540"/>
<dbReference type="EMDB" id="EMD-25541"/>
<dbReference type="EMDB" id="EMD-25542"/>
<dbReference type="EMDB" id="EMD-25543"/>
<dbReference type="EMDB" id="EMD-25544"/>
<dbReference type="EMDB" id="EMD-26035"/>
<dbReference type="EMDB" id="EMD-26036"/>
<dbReference type="EMDB" id="EMD-26444"/>
<dbReference type="EMDB" id="EMD-26445"/>
<dbReference type="EMDB" id="EMD-40344"/>
<dbReference type="EMDB" id="EMD-4130"/>
<dbReference type="EMDB" id="EMD-4131"/>
<dbReference type="EMDB" id="EMD-4132"/>
<dbReference type="EMDB" id="EMD-4133"/>
<dbReference type="EMDB" id="EMD-4134"/>
<dbReference type="EMDB" id="EMD-4135"/>
<dbReference type="EMDB" id="EMD-4136"/>
<dbReference type="EMDB" id="EMD-4137"/>
<dbReference type="EMDB" id="EMD-43189"/>
<dbReference type="EMDB" id="EMD-44461"/>
<dbReference type="EMDB" id="EMD-44463"/>
<dbReference type="EMDB" id="EMD-44464"/>
<dbReference type="EMDB" id="EMD-45307"/>
<dbReference type="EMDB" id="EMD-4729"/>
<dbReference type="EMDB" id="EMD-4735"/>
<dbReference type="EMDB" id="EMD-4737"/>
<dbReference type="EMDB" id="EMD-4745"/>
<dbReference type="EMDB" id="EMD-50124"/>
<dbReference type="EMDB" id="EMD-50125"/>
<dbReference type="EMDB" id="EMD-50126"/>
<dbReference type="EMDB" id="EMD-7834"/>
<dbReference type="EMDB" id="EMD-7836"/>
<dbReference type="EMDB" id="EMD-8190"/>
<dbReference type="EMDB" id="EMD-9237"/>
<dbReference type="EMDB" id="EMD-9239"/>
<dbReference type="EMDB" id="EMD-9240"/>
<dbReference type="EMDB" id="EMD-9242"/>
<dbReference type="SMR" id="G1TRM4"/>
<dbReference type="FunCoup" id="G1TRM4">
    <property type="interactions" value="1476"/>
</dbReference>
<dbReference type="IntAct" id="G1TRM4">
    <property type="interactions" value="1"/>
</dbReference>
<dbReference type="STRING" id="9986.ENSOCUP00000019681"/>
<dbReference type="PaxDb" id="9986-ENSOCUP00000019681"/>
<dbReference type="Ensembl" id="ENSOCUT00000026363.1">
    <property type="protein sequence ID" value="ENSOCUP00000019681.1"/>
    <property type="gene ID" value="ENSOCUG00000027435.1"/>
</dbReference>
<dbReference type="GeneID" id="127482766"/>
<dbReference type="KEGG" id="ocu:100343123"/>
<dbReference type="KEGG" id="ocu:100347468"/>
<dbReference type="eggNOG" id="KOG1728">
    <property type="taxonomic scope" value="Eukaryota"/>
</dbReference>
<dbReference type="GeneTree" id="ENSGT00390000002732"/>
<dbReference type="HOGENOM" id="CLU_073626_0_2_1"/>
<dbReference type="InParanoid" id="G1TRM4"/>
<dbReference type="OMA" id="DYEKCPF"/>
<dbReference type="OrthoDB" id="10254436at2759"/>
<dbReference type="TreeFam" id="TF300126"/>
<dbReference type="EvolutionaryTrace" id="G1TRM4"/>
<dbReference type="Proteomes" id="UP000001811">
    <property type="component" value="Chromosome 2"/>
</dbReference>
<dbReference type="Bgee" id="ENSOCUG00000027435">
    <property type="expression patterns" value="Expressed in upper lobe of left lung and 14 other cell types or tissues"/>
</dbReference>
<dbReference type="GO" id="GO:0022626">
    <property type="term" value="C:cytosolic ribosome"/>
    <property type="evidence" value="ECO:0000314"/>
    <property type="project" value="UniProtKB"/>
</dbReference>
<dbReference type="GO" id="GO:0022627">
    <property type="term" value="C:cytosolic small ribosomal subunit"/>
    <property type="evidence" value="ECO:0007669"/>
    <property type="project" value="TreeGrafter"/>
</dbReference>
<dbReference type="GO" id="GO:0005730">
    <property type="term" value="C:nucleolus"/>
    <property type="evidence" value="ECO:0007669"/>
    <property type="project" value="UniProtKB-SubCell"/>
</dbReference>
<dbReference type="GO" id="GO:0019843">
    <property type="term" value="F:rRNA binding"/>
    <property type="evidence" value="ECO:0007669"/>
    <property type="project" value="UniProtKB-KW"/>
</dbReference>
<dbReference type="GO" id="GO:0003735">
    <property type="term" value="F:structural constituent of ribosome"/>
    <property type="evidence" value="ECO:0000314"/>
    <property type="project" value="UniProtKB"/>
</dbReference>
<dbReference type="GO" id="GO:0006412">
    <property type="term" value="P:translation"/>
    <property type="evidence" value="ECO:0007669"/>
    <property type="project" value="InterPro"/>
</dbReference>
<dbReference type="CDD" id="cd00364">
    <property type="entry name" value="Ribosomal_uS17"/>
    <property type="match status" value="1"/>
</dbReference>
<dbReference type="FunFam" id="2.40.50.1000:FF:000008">
    <property type="entry name" value="40S ribosomal protein S11"/>
    <property type="match status" value="1"/>
</dbReference>
<dbReference type="Gene3D" id="2.40.50.1000">
    <property type="match status" value="1"/>
</dbReference>
<dbReference type="InterPro" id="IPR012340">
    <property type="entry name" value="NA-bd_OB-fold"/>
</dbReference>
<dbReference type="InterPro" id="IPR000266">
    <property type="entry name" value="Ribosomal_uS17"/>
</dbReference>
<dbReference type="InterPro" id="IPR028333">
    <property type="entry name" value="Ribosomal_uS17_arc/euk"/>
</dbReference>
<dbReference type="InterPro" id="IPR019979">
    <property type="entry name" value="Ribosomal_uS17_CS"/>
</dbReference>
<dbReference type="InterPro" id="IPR032440">
    <property type="entry name" value="Ribosomal_uS17_N"/>
</dbReference>
<dbReference type="NCBIfam" id="NF006345">
    <property type="entry name" value="PRK08572.1"/>
    <property type="match status" value="1"/>
</dbReference>
<dbReference type="NCBIfam" id="TIGR03630">
    <property type="entry name" value="uS17_arch"/>
    <property type="match status" value="1"/>
</dbReference>
<dbReference type="PANTHER" id="PTHR10744">
    <property type="entry name" value="40S RIBOSOMAL PROTEIN S11 FAMILY MEMBER"/>
    <property type="match status" value="1"/>
</dbReference>
<dbReference type="PANTHER" id="PTHR10744:SF52">
    <property type="entry name" value="SMALL RIBOSOMAL SUBUNIT PROTEIN US17"/>
    <property type="match status" value="1"/>
</dbReference>
<dbReference type="Pfam" id="PF00366">
    <property type="entry name" value="Ribosomal_S17"/>
    <property type="match status" value="1"/>
</dbReference>
<dbReference type="Pfam" id="PF16205">
    <property type="entry name" value="Ribosomal_S17_N"/>
    <property type="match status" value="1"/>
</dbReference>
<dbReference type="PRINTS" id="PR00973">
    <property type="entry name" value="RIBOSOMALS17"/>
</dbReference>
<dbReference type="SUPFAM" id="SSF50249">
    <property type="entry name" value="Nucleic acid-binding proteins"/>
    <property type="match status" value="1"/>
</dbReference>
<dbReference type="PROSITE" id="PS00056">
    <property type="entry name" value="RIBOSOMAL_S17"/>
    <property type="match status" value="1"/>
</dbReference>
<comment type="function">
    <text evidence="1 3 4 5 6 10">Component of the small ribosomal subunit. The ribosome is a large ribonucleoprotein complex responsible for the synthesis of proteins in the cell (PubMed:23873042, PubMed:25601755, PubMed:26245381, PubMed:27863242, PubMed:30517857). Part of the small subunit (SSU) processome, first precursor of the small eukaryotic ribosomal subunit (PubMed:23873042, PubMed:25601755, PubMed:26245381, PubMed:27863242, PubMed:30517857). During the assembly of the SSU processome in the nucleolus, many ribosome biogenesis factors, an RNA chaperone and ribosomal proteins associate with the nascent pre-rRNA and work in concert to generate RNA folding, modifications, rearrangements and cleavage as well as targeted degradation of pre-ribosomal RNA by the RNA exosome (By similarity).</text>
</comment>
<comment type="subunit">
    <text evidence="3 4 5 6 7 8 9 10 11 12 13 14 15 16 17 18 19">Component of the small ribosomal subunit. Part of the small subunit (SSU) processome, composed of more than 70 proteins and the RNA chaperone small nucleolar RNA (snoRNA) U3.</text>
</comment>
<comment type="subcellular location">
    <subcellularLocation>
        <location evidence="3 4 5 6 7 8 9 10 11 12 13 14 15 16 17 18 19">Cytoplasm</location>
    </subcellularLocation>
    <subcellularLocation>
        <location evidence="1">Nucleus</location>
        <location evidence="1">Nucleolus</location>
    </subcellularLocation>
</comment>
<comment type="PTM">
    <text evidence="2">Citrullinated by PADI4.</text>
</comment>
<comment type="similarity">
    <text evidence="20">Belongs to the universal ribosomal protein uS17 family.</text>
</comment>
<proteinExistence type="evidence at protein level"/>
<protein>
    <recommendedName>
        <fullName>Small ribosomal subunit protein uS17</fullName>
    </recommendedName>
    <alternativeName>
        <fullName>40S ribosomal protein S11</fullName>
    </alternativeName>
</protein>
<reference key="1">
    <citation type="journal article" date="2011" name="Nature">
        <title>A high-resolution map of human evolutionary constraint using 29 mammals.</title>
        <authorList>
            <person name="Lindblad-Toh K."/>
            <person name="Garber M."/>
            <person name="Zuk O."/>
            <person name="Lin M.F."/>
            <person name="Parker B.J."/>
            <person name="Washietl S."/>
            <person name="Kheradpour P."/>
            <person name="Ernst J."/>
            <person name="Jordan G."/>
            <person name="Mauceli E."/>
            <person name="Ward L.D."/>
            <person name="Lowe C.B."/>
            <person name="Holloway A.K."/>
            <person name="Clamp M."/>
            <person name="Gnerre S."/>
            <person name="Alfoldi J."/>
            <person name="Beal K."/>
            <person name="Chang J."/>
            <person name="Clawson H."/>
            <person name="Cuff J."/>
            <person name="Di Palma F."/>
            <person name="Fitzgerald S."/>
            <person name="Flicek P."/>
            <person name="Guttman M."/>
            <person name="Hubisz M.J."/>
            <person name="Jaffe D.B."/>
            <person name="Jungreis I."/>
            <person name="Kent W.J."/>
            <person name="Kostka D."/>
            <person name="Lara M."/>
            <person name="Martins A.L."/>
            <person name="Massingham T."/>
            <person name="Moltke I."/>
            <person name="Raney B.J."/>
            <person name="Rasmussen M.D."/>
            <person name="Robinson J."/>
            <person name="Stark A."/>
            <person name="Vilella A.J."/>
            <person name="Wen J."/>
            <person name="Xie X."/>
            <person name="Zody M.C."/>
            <person name="Baldwin J."/>
            <person name="Bloom T."/>
            <person name="Chin C.W."/>
            <person name="Heiman D."/>
            <person name="Nicol R."/>
            <person name="Nusbaum C."/>
            <person name="Young S."/>
            <person name="Wilkinson J."/>
            <person name="Worley K.C."/>
            <person name="Kovar C.L."/>
            <person name="Muzny D.M."/>
            <person name="Gibbs R.A."/>
            <person name="Cree A."/>
            <person name="Dihn H.H."/>
            <person name="Fowler G."/>
            <person name="Jhangiani S."/>
            <person name="Joshi V."/>
            <person name="Lee S."/>
            <person name="Lewis L.R."/>
            <person name="Nazareth L.V."/>
            <person name="Okwuonu G."/>
            <person name="Santibanez J."/>
            <person name="Warren W.C."/>
            <person name="Mardis E.R."/>
            <person name="Weinstock G.M."/>
            <person name="Wilson R.K."/>
            <person name="Delehaunty K."/>
            <person name="Dooling D."/>
            <person name="Fronik C."/>
            <person name="Fulton L."/>
            <person name="Fulton B."/>
            <person name="Graves T."/>
            <person name="Minx P."/>
            <person name="Sodergren E."/>
            <person name="Birney E."/>
            <person name="Margulies E.H."/>
            <person name="Herrero J."/>
            <person name="Green E.D."/>
            <person name="Haussler D."/>
            <person name="Siepel A."/>
            <person name="Goldman N."/>
            <person name="Pollard K.S."/>
            <person name="Pedersen J.S."/>
            <person name="Lander E.S."/>
            <person name="Kellis M."/>
        </authorList>
    </citation>
    <scope>NUCLEOTIDE SEQUENCE [LARGE SCALE GENOMIC DNA]</scope>
    <source>
        <strain>Thorbecke</strain>
    </source>
</reference>
<reference evidence="25 26" key="2">
    <citation type="journal article" date="2013" name="Nature">
        <title>The initiation of mammalian protein synthesis and mRNA scanning mechanism.</title>
        <authorList>
            <person name="Lomakin I.B."/>
            <person name="Steitz T.A."/>
        </authorList>
    </citation>
    <scope>X-RAY CRYSTALLOGRAPHY (7.01 ANGSTROMS) OF 40S RIBOSOME</scope>
    <scope>FUNCTION</scope>
    <scope>SUBUNIT</scope>
    <scope>SUBCELLULAR LOCATION</scope>
</reference>
<reference evidence="23 24" key="3">
    <citation type="journal article" date="2015" name="Mol. Cell">
        <title>Cryo-EM of ribosomal 80S complexes with termination factors reveals the translocated cricket paralysis virus IRES.</title>
        <authorList>
            <person name="Muhs M."/>
            <person name="Hilal T."/>
            <person name="Mielke T."/>
            <person name="Skabkin M.A."/>
            <person name="Sanbonmatsu K.Y."/>
            <person name="Pestova T.V."/>
            <person name="Spahn C.M."/>
        </authorList>
    </citation>
    <scope>STRUCTURE BY ELECTRON MICROSCOPY (9.00 ANGSTROMS) OF RIBOSOME</scope>
    <scope>FUNCTION</scope>
    <scope>SUBUNIT</scope>
    <scope>SUBCELLULAR LOCATION</scope>
</reference>
<reference evidence="21 22" key="4">
    <citation type="journal article" date="2015" name="Nature">
        <title>Structural basis for stop codon recognition in eukaryotes.</title>
        <authorList>
            <person name="Brown A."/>
            <person name="Shao S."/>
            <person name="Murray J."/>
            <person name="Hegde R.S."/>
            <person name="Ramakrishnan V."/>
        </authorList>
    </citation>
    <scope>STRUCTURE BY ELECTRON MICROSCOPY (3.45 ANGSTROMS) OF RIBOSOME</scope>
    <scope>FUNCTION</scope>
    <scope>SUBCELLULAR LOCATION</scope>
    <scope>SUBUNIT</scope>
</reference>
<reference evidence="27 28" key="5">
    <citation type="journal article" date="2016" name="Cell">
        <title>Decoding mammalian ribosome-mRNA states by translational GTPase complexes.</title>
        <authorList>
            <person name="Shao S."/>
            <person name="Murray J."/>
            <person name="Brown A."/>
            <person name="Taunton J."/>
            <person name="Ramakrishnan V."/>
            <person name="Hegde R.S."/>
        </authorList>
    </citation>
    <scope>STRUCTURE BY ELECTRON MICROSCOPY (3.31 ANGSTROMS) OF RIBOSOME</scope>
    <scope>FUNCTION</scope>
    <scope>SUBCELLULAR LOCATION</scope>
    <scope>SUBUNIT</scope>
</reference>
<reference evidence="31" key="6">
    <citation type="journal article" date="2018" name="Cell Rep.">
        <title>tRNA translocation by the eukaryotic 80S ribosome and the impact of GTP hydrolysis.</title>
        <authorList>
            <person name="Flis J."/>
            <person name="Holm M."/>
            <person name="Rundlet E.J."/>
            <person name="Loerke J."/>
            <person name="Hilal T."/>
            <person name="Dabrowski M."/>
            <person name="Burger J."/>
            <person name="Mielke T."/>
            <person name="Blanchard S.C."/>
            <person name="Spahn C.M.T."/>
            <person name="Budkevich T.V."/>
        </authorList>
    </citation>
    <scope>STRUCTURE BY ELECTRON MICROSCOPY (3.60 ANGSTROMS) OF RIBOSOME</scope>
    <scope>FUNCTION</scope>
    <scope>SUBCELLULAR LOCATION</scope>
    <scope>SUBUNIT</scope>
</reference>
<reference evidence="29 30" key="7">
    <citation type="journal article" date="2018" name="Elife">
        <title>Dual tRNA mimicry in the Cricket paralysis virus IRES uncovers an unexpected similarity with the Hepatitis C Virus IRES.</title>
        <authorList>
            <person name="Pisareva V.P."/>
            <person name="Pisarev A.V."/>
            <person name="Fernandez I.S."/>
        </authorList>
    </citation>
    <scope>STRUCTURE BY ELECTRON MICROSCOPY (3.20 ANGSTROMS) OF RIBOSOME</scope>
    <scope>SUBCELLULAR LOCATION</scope>
    <scope>SUBUNIT</scope>
</reference>
<reference evidence="33 34" key="8">
    <citation type="journal article" date="2018" name="Elife">
        <title>Structures of translationally inactive mammalian ribosomes.</title>
        <authorList>
            <person name="Brown A."/>
            <person name="Baird M.R."/>
            <person name="Yip M.C."/>
            <person name="Murray J."/>
            <person name="Shao S."/>
        </authorList>
    </citation>
    <scope>STRUCTURE BY ELECTRON MICROSCOPY (3.30 ANGSTROMS) OF 2-217 OF RIBOSOME</scope>
    <scope>SUBCELLULAR LOCATION</scope>
    <scope>SUBUNIT</scope>
</reference>
<reference evidence="32" key="9">
    <citation type="journal article" date="2018" name="Mol. Cell">
        <title>ZNF598 is a quality control sensor of collided ribosomes.</title>
        <authorList>
            <person name="Juszkiewicz S."/>
            <person name="Chandrasekaran V."/>
            <person name="Lin Z."/>
            <person name="Kraatz S."/>
            <person name="Ramakrishnan V."/>
            <person name="Hegde R.S."/>
        </authorList>
    </citation>
    <scope>STRUCTURE BY ELECTRON MICROSCOPY (3.80 ANGSTROMS) OF RIBOSOME</scope>
    <scope>SUBCELLULAR LOCATION</scope>
    <scope>SUBUNIT</scope>
</reference>
<reference evidence="37 38" key="10">
    <citation type="journal article" date="2019" name="Elife">
        <title>Structural and mutational analysis of the ribosome-arresting human XBP1u.</title>
        <authorList>
            <person name="Shanmuganathan V."/>
            <person name="Schiller N."/>
            <person name="Magoulopoulou A."/>
            <person name="Cheng J."/>
            <person name="Braunger K."/>
            <person name="Cymer F."/>
            <person name="Berninghausen O."/>
            <person name="Beatrix B."/>
            <person name="Kohno K."/>
            <person name="von Heijne G."/>
            <person name="Beckmann R."/>
        </authorList>
    </citation>
    <scope>STRUCTURE BY ELECTRON MICROSCOPY (3.00 ANGSTROMS) OF RIBOSOME</scope>
    <scope>SUBCELLULAR LOCATION</scope>
    <scope>SUBUNIT</scope>
</reference>
<reference evidence="35 36" key="11">
    <citation type="journal article" date="2019" name="EMBO J.">
        <title>The Israeli acute paralysis virus IRES captures host ribosomes by mimicking a ribosomal state with hybrid tRNAs.</title>
        <authorList>
            <person name="Acosta-Reyes F."/>
            <person name="Neupane R."/>
            <person name="Frank J."/>
            <person name="Fernandez I.S."/>
        </authorList>
    </citation>
    <scope>STRUCTURE BY ELECTRON MICROSCOPY (3.10 ANGSTROMS) OF RIBOSOME</scope>
    <scope>SUBUNIT</scope>
    <scope>SUBCELLULAR LOCATION</scope>
</reference>
<reference evidence="39" key="12">
    <citation type="journal article" date="2019" name="Nat. Struct. Mol. Biol.">
        <title>Mechanism of ribosome stalling during translation of a poly(A) tail.</title>
        <authorList>
            <person name="Chandrasekaran V."/>
            <person name="Juszkiewicz S."/>
            <person name="Choi J."/>
            <person name="Puglisi J.D."/>
            <person name="Brown A."/>
            <person name="Shao S."/>
            <person name="Ramakrishnan V."/>
            <person name="Hegde R.S."/>
        </authorList>
    </citation>
    <scope>STRUCTURE BY ELECTRON MICROSCOPY (2.80 ANGSTROMS) OF RIBOSOME</scope>
    <scope>SUBCELLULAR LOCATION</scope>
    <scope>SUBUNIT</scope>
</reference>
<reference evidence="42 43" key="13">
    <citation type="journal article" date="2020" name="Cell Rep.">
        <title>The Halastavi arva virus intergenic region IRES promotes translation by the simplest possible initiation mechanism.</title>
        <authorList>
            <person name="Abaeva I.S."/>
            <person name="Vicens Q."/>
            <person name="Bochler A."/>
            <person name="Soufari H."/>
            <person name="Simonetti A."/>
            <person name="Pestova T.V."/>
            <person name="Hashem Y."/>
            <person name="Hellen C.U.T."/>
        </authorList>
    </citation>
    <scope>STRUCTURE BY ELECTRON MICROSCOPY (3.49 ANGSTROMS) OF RIBOSOME</scope>
    <scope>SUBCELLULAR LOCATION</scope>
    <scope>SUBUNIT</scope>
</reference>
<reference evidence="40 41" key="14">
    <citation type="journal article" date="2020" name="Elife">
        <title>A complex IRES at the 5'-UTR of a viral mRNA assembles a functional 48S complex via an uAUG intermediate.</title>
        <authorList>
            <person name="Neupane R."/>
            <person name="Pisareva V.P."/>
            <person name="Rodriguez C.F."/>
            <person name="Pisarev A.V."/>
            <person name="Fernandez I.S."/>
        </authorList>
    </citation>
    <scope>STRUCTURE BY ELECTRON MICROSCOPY (3.00 ANGSTROMS) OF RIBOSOME</scope>
    <scope>SUBUNIT</scope>
    <scope>SUBCELLULAR LOCATION</scope>
</reference>
<reference evidence="45 46" key="15">
    <citation type="journal article" date="2022" name="EMBO J.">
        <title>Molecular architecture of 40S translation initiation complexes on the hepatitis C virus IRES.</title>
        <authorList>
            <person name="Brown Z.P."/>
            <person name="Abaeva I.S."/>
            <person name="De S."/>
            <person name="Hellen C.U.T."/>
            <person name="Pestova T.V."/>
            <person name="Frank J."/>
        </authorList>
    </citation>
    <scope>STRUCTURE BY ELECTRON MICROSCOPY (3.50 ANGSTROMS) OF RIBOSOME</scope>
    <scope>SUBCELLULAR LOCATION</scope>
    <scope>SUBUNIT</scope>
</reference>
<reference evidence="47 48" key="16">
    <citation type="journal article" date="2022" name="Mol. Cell">
        <title>Direct epitranscriptomic regulation of mammalian translation initiation through N4-acetylcytidine.</title>
        <authorList>
            <person name="Arango D."/>
            <person name="Sturgill D."/>
            <person name="Yang R."/>
            <person name="Kanai T."/>
            <person name="Bauer P."/>
            <person name="Roy J."/>
            <person name="Wang Z."/>
            <person name="Hosogane M."/>
            <person name="Schiffers S."/>
            <person name="Oberdoerffer S."/>
        </authorList>
    </citation>
    <scope>STRUCTURE BY ELECTRON MICROSCOPY (2.80 ANGSTROMS) OF RIBOSOME</scope>
    <scope>SUBCELLULAR LOCATION</scope>
    <scope>SUBUNIT</scope>
</reference>
<reference evidence="49 50" key="17">
    <citation type="journal article" date="2022" name="Science">
        <title>Structure of the mammalian ribosome as it decodes the selenocysteine UGA codon.</title>
        <authorList>
            <person name="Hilal T."/>
            <person name="Killam B.Y."/>
            <person name="Grozdanovic M."/>
            <person name="Dobosz-Bartoszek M."/>
            <person name="Loerke J."/>
            <person name="Buerger J."/>
            <person name="Mielke T."/>
            <person name="Copeland P.R."/>
            <person name="Simonovic M."/>
            <person name="Spahn C.M.T."/>
        </authorList>
    </citation>
    <scope>STRUCTURE BY ELECTRON MICROSCOPY (2.80 ANGSTROMS) OF RIBOSOME</scope>
    <scope>SUBCELLULAR LOCATION</scope>
    <scope>SUBUNIT</scope>
</reference>
<reference evidence="44" key="18">
    <citation type="journal article" date="2023" name="Nature">
        <title>A molecular network of conserved factors keeps ribosomes dormant in the egg.</title>
        <authorList>
            <person name="Leesch F."/>
            <person name="Lorenzo-Orts L."/>
            <person name="Pribitzer C."/>
            <person name="Grishkovskaya I."/>
            <person name="Roehsner J."/>
            <person name="Chugunova A."/>
            <person name="Matzinger M."/>
            <person name="Roitinger E."/>
            <person name="Belacic K."/>
            <person name="Kandolf S."/>
            <person name="Lin T.Y."/>
            <person name="Mechtler K."/>
            <person name="Meinhart A."/>
            <person name="Haselbach D."/>
            <person name="Pauli A."/>
        </authorList>
    </citation>
    <scope>STRUCTURE BY ELECTRON MICROSCOPY (2.30 ANGSTROMS) OF RIBOSOME</scope>
    <scope>SUBCELLULAR LOCATION</scope>
    <scope>SUBUNIT</scope>
</reference>
<gene>
    <name type="primary">RPS11</name>
</gene>